<sequence length="323" mass="36932">MDSKYQCVKLNDSHFMPVLGFGTYAPPEVPKSKALEATKLAIEAGFRHIDSAHLYNNEEQVGLAIRSKIADGSVKREDIFYTSKLWCNSHRPELVRPALERSLKNLQLDYVDLYLVHFPVSVKPGEEVIPKDENGKILFDTVDLCATWEAMEKCKDAGLAKSIGVSNFNRRQLEMILNKPGLKYKPVCNQVECHPYFNQRKLLDFCKSKDIVLVAYSALGSHREEKWVDPNSPVLLEDPVLCALAKKHKQTPALIALRYQLQRGVVVLAKSYNEQRIRQNMQVFDFQLTSEDMKTIDGLNRNMRYLTLDIFAGPPNYPFSDEY</sequence>
<reference key="1">
    <citation type="submission" date="2004-11" db="EMBL/GenBank/DDBJ databases">
        <authorList>
            <consortium name="The German cDNA consortium"/>
        </authorList>
    </citation>
    <scope>NUCLEOTIDE SEQUENCE [LARGE SCALE MRNA]</scope>
    <source>
        <tissue>Kidney</tissue>
    </source>
</reference>
<organism>
    <name type="scientific">Pongo abelii</name>
    <name type="common">Sumatran orangutan</name>
    <name type="synonym">Pongo pygmaeus abelii</name>
    <dbReference type="NCBI Taxonomy" id="9601"/>
    <lineage>
        <taxon>Eukaryota</taxon>
        <taxon>Metazoa</taxon>
        <taxon>Chordata</taxon>
        <taxon>Craniata</taxon>
        <taxon>Vertebrata</taxon>
        <taxon>Euteleostomi</taxon>
        <taxon>Mammalia</taxon>
        <taxon>Eutheria</taxon>
        <taxon>Euarchontoglires</taxon>
        <taxon>Primates</taxon>
        <taxon>Haplorrhini</taxon>
        <taxon>Catarrhini</taxon>
        <taxon>Hominidae</taxon>
        <taxon>Pongo</taxon>
    </lineage>
</organism>
<protein>
    <recommendedName>
        <fullName evidence="2">Aldo-keto reductase family 1 member C1</fullName>
        <ecNumber evidence="2">1.1.1.-</ecNumber>
        <ecNumber evidence="2">1.1.1.112</ecNumber>
        <ecNumber evidence="2">1.1.1.209</ecNumber>
        <ecNumber evidence="2">1.1.1.210</ecNumber>
        <ecNumber evidence="2">1.1.1.357</ecNumber>
        <ecNumber evidence="2">1.1.1.51</ecNumber>
        <ecNumber evidence="2">1.1.1.53</ecNumber>
        <ecNumber evidence="2">1.1.1.62</ecNumber>
        <ecNumber evidence="2">1.3.1.20</ecNumber>
    </recommendedName>
    <alternativeName>
        <fullName>20-alpha-hydroxysteroid dehydrogenase</fullName>
        <shortName>20-alpha-HSD</shortName>
        <ecNumber evidence="2">1.1.1.149</ecNumber>
    </alternativeName>
</protein>
<dbReference type="EC" id="1.1.1.-" evidence="2"/>
<dbReference type="EC" id="1.1.1.112" evidence="2"/>
<dbReference type="EC" id="1.1.1.209" evidence="2"/>
<dbReference type="EC" id="1.1.1.210" evidence="2"/>
<dbReference type="EC" id="1.1.1.357" evidence="2"/>
<dbReference type="EC" id="1.1.1.51" evidence="2"/>
<dbReference type="EC" id="1.1.1.53" evidence="2"/>
<dbReference type="EC" id="1.1.1.62" evidence="2"/>
<dbReference type="EC" id="1.3.1.20" evidence="2"/>
<dbReference type="EC" id="1.1.1.149" evidence="2"/>
<dbReference type="EMBL" id="CR857469">
    <property type="protein sequence ID" value="CAH89757.1"/>
    <property type="molecule type" value="mRNA"/>
</dbReference>
<dbReference type="RefSeq" id="NP_001124803.1">
    <property type="nucleotide sequence ID" value="NM_001131331.1"/>
</dbReference>
<dbReference type="SMR" id="Q5REQ0"/>
<dbReference type="FunCoup" id="Q5REQ0">
    <property type="interactions" value="329"/>
</dbReference>
<dbReference type="STRING" id="9601.ENSPPYP00000002373"/>
<dbReference type="GeneID" id="100171658"/>
<dbReference type="KEGG" id="pon:100171658"/>
<dbReference type="CTD" id="1645"/>
<dbReference type="eggNOG" id="KOG1577">
    <property type="taxonomic scope" value="Eukaryota"/>
</dbReference>
<dbReference type="InParanoid" id="Q5REQ0"/>
<dbReference type="OrthoDB" id="9508965at2759"/>
<dbReference type="Proteomes" id="UP000001595">
    <property type="component" value="Unplaced"/>
</dbReference>
<dbReference type="GO" id="GO:0005829">
    <property type="term" value="C:cytosol"/>
    <property type="evidence" value="ECO:0000250"/>
    <property type="project" value="UniProtKB"/>
</dbReference>
<dbReference type="GO" id="GO:0047006">
    <property type="term" value="F:17-alpha,20-alpha-dihydroxypregn-4-en-3-one dehydrogenase [NAD(P)+] activity"/>
    <property type="evidence" value="ECO:0007669"/>
    <property type="project" value="UniProtKB-EC"/>
</dbReference>
<dbReference type="GO" id="GO:0033703">
    <property type="term" value="F:3-beta-hydroxy-5-beta-steroid dehydrogenase (NADP+) activity"/>
    <property type="evidence" value="ECO:0007669"/>
    <property type="project" value="RHEA"/>
</dbReference>
<dbReference type="GO" id="GO:0047024">
    <property type="term" value="F:5-alpha-androstane-3-beta,17-beta-diol dehydrogenase (NADP+) activity"/>
    <property type="evidence" value="ECO:0007669"/>
    <property type="project" value="UniProtKB-EC"/>
</dbReference>
<dbReference type="GO" id="GO:0047044">
    <property type="term" value="F:androstan-3-alpha,17-beta-diol dehydrogenase (NAD+) activity"/>
    <property type="evidence" value="ECO:0007669"/>
    <property type="project" value="UniProtKB-EC"/>
</dbReference>
<dbReference type="GO" id="GO:0047042">
    <property type="term" value="F:androsterone dehydrogenase (B-specific) activity"/>
    <property type="evidence" value="ECO:0000250"/>
    <property type="project" value="UniProtKB"/>
</dbReference>
<dbReference type="GO" id="GO:0032052">
    <property type="term" value="F:bile acid binding"/>
    <property type="evidence" value="ECO:0000250"/>
    <property type="project" value="UniProtKB"/>
</dbReference>
<dbReference type="GO" id="GO:0031406">
    <property type="term" value="F:carboxylic acid binding"/>
    <property type="evidence" value="ECO:0000250"/>
    <property type="project" value="UniProtKB"/>
</dbReference>
<dbReference type="GO" id="GO:0004303">
    <property type="term" value="F:estradiol 17-beta-dehydrogenase [NAD(P)+] activity"/>
    <property type="evidence" value="ECO:0007669"/>
    <property type="project" value="UniProtKB-EC"/>
</dbReference>
<dbReference type="GO" id="GO:0047718">
    <property type="term" value="F:indanol dehydrogenase activity"/>
    <property type="evidence" value="ECO:0007669"/>
    <property type="project" value="UniProtKB-EC"/>
</dbReference>
<dbReference type="GO" id="GO:0047045">
    <property type="term" value="F:testosterone 17-beta-dehydrogenase (NADP+) activity"/>
    <property type="evidence" value="ECO:0007669"/>
    <property type="project" value="RHEA"/>
</dbReference>
<dbReference type="GO" id="GO:0047115">
    <property type="term" value="F:trans-1,2-dihydrobenzene-1,2-diol dehydrogenase activity"/>
    <property type="evidence" value="ECO:0000250"/>
    <property type="project" value="UniProtKB"/>
</dbReference>
<dbReference type="GO" id="GO:0008206">
    <property type="term" value="P:bile acid metabolic process"/>
    <property type="evidence" value="ECO:0000250"/>
    <property type="project" value="UniProtKB"/>
</dbReference>
<dbReference type="GO" id="GO:0007586">
    <property type="term" value="P:digestion"/>
    <property type="evidence" value="ECO:0000250"/>
    <property type="project" value="UniProtKB"/>
</dbReference>
<dbReference type="CDD" id="cd19108">
    <property type="entry name" value="AKR_AKR1C1-35"/>
    <property type="match status" value="1"/>
</dbReference>
<dbReference type="FunFam" id="3.20.20.100:FF:000003">
    <property type="entry name" value="Aldo-keto reductase family 1 member C3"/>
    <property type="match status" value="1"/>
</dbReference>
<dbReference type="Gene3D" id="3.20.20.100">
    <property type="entry name" value="NADP-dependent oxidoreductase domain"/>
    <property type="match status" value="1"/>
</dbReference>
<dbReference type="InterPro" id="IPR020471">
    <property type="entry name" value="AKR"/>
</dbReference>
<dbReference type="InterPro" id="IPR044482">
    <property type="entry name" value="AKR1C"/>
</dbReference>
<dbReference type="InterPro" id="IPR018170">
    <property type="entry name" value="Aldo/ket_reductase_CS"/>
</dbReference>
<dbReference type="InterPro" id="IPR023210">
    <property type="entry name" value="NADP_OxRdtase_dom"/>
</dbReference>
<dbReference type="InterPro" id="IPR036812">
    <property type="entry name" value="NADP_OxRdtase_dom_sf"/>
</dbReference>
<dbReference type="PANTHER" id="PTHR11732">
    <property type="entry name" value="ALDO/KETO REDUCTASE"/>
    <property type="match status" value="1"/>
</dbReference>
<dbReference type="Pfam" id="PF00248">
    <property type="entry name" value="Aldo_ket_red"/>
    <property type="match status" value="1"/>
</dbReference>
<dbReference type="PIRSF" id="PIRSF000097">
    <property type="entry name" value="AKR"/>
    <property type="match status" value="1"/>
</dbReference>
<dbReference type="PRINTS" id="PR00069">
    <property type="entry name" value="ALDKETRDTASE"/>
</dbReference>
<dbReference type="SUPFAM" id="SSF51430">
    <property type="entry name" value="NAD(P)-linked oxidoreductase"/>
    <property type="match status" value="1"/>
</dbReference>
<dbReference type="PROSITE" id="PS00798">
    <property type="entry name" value="ALDOKETO_REDUCTASE_1"/>
    <property type="match status" value="1"/>
</dbReference>
<dbReference type="PROSITE" id="PS00062">
    <property type="entry name" value="ALDOKETO_REDUCTASE_2"/>
    <property type="match status" value="1"/>
</dbReference>
<dbReference type="PROSITE" id="PS00063">
    <property type="entry name" value="ALDOKETO_REDUCTASE_3"/>
    <property type="match status" value="1"/>
</dbReference>
<comment type="function">
    <text evidence="2">Cytosolic aldo-keto reductase that catalyzes the NADH and NADPH-dependent reduction of ketosteroids to hydroxysteroids. Most probably acts as a reductase in vivo since the oxidase activity measured in vitro is inhibited by physiological concentrations of NADPH. Displays a broad positional specificity acting on positions 3, 17 and 20 of steroids and regulates the metabolism of hormones like estrogens and androgens. May also reduce conjugated steroids such as 5alpha-dihydrotestosterone sulfate. Displays affinity for bile acids.</text>
</comment>
<comment type="catalytic activity">
    <reaction evidence="2">
        <text>a 3alpha-hydroxysteroid + NADP(+) = a 3-oxosteroid + NADPH + H(+)</text>
        <dbReference type="Rhea" id="RHEA:34783"/>
        <dbReference type="ChEBI" id="CHEBI:15378"/>
        <dbReference type="ChEBI" id="CHEBI:36835"/>
        <dbReference type="ChEBI" id="CHEBI:47788"/>
        <dbReference type="ChEBI" id="CHEBI:57783"/>
        <dbReference type="ChEBI" id="CHEBI:58349"/>
        <dbReference type="EC" id="1.1.1.357"/>
    </reaction>
</comment>
<comment type="catalytic activity">
    <reaction evidence="2">
        <text>a 3alpha-hydroxysteroid + NAD(+) = a 3-oxosteroid + NADH + H(+)</text>
        <dbReference type="Rhea" id="RHEA:34779"/>
        <dbReference type="ChEBI" id="CHEBI:15378"/>
        <dbReference type="ChEBI" id="CHEBI:36835"/>
        <dbReference type="ChEBI" id="CHEBI:47788"/>
        <dbReference type="ChEBI" id="CHEBI:57540"/>
        <dbReference type="ChEBI" id="CHEBI:57945"/>
        <dbReference type="EC" id="1.1.1.357"/>
    </reaction>
</comment>
<comment type="catalytic activity">
    <reaction evidence="2">
        <text>(17R,20S)-17,20-dihydroxypregn-4-en-3-one + NADP(+) = 17alpha-hydroxyprogesterone + NADPH + H(+)</text>
        <dbReference type="Rhea" id="RHEA:15857"/>
        <dbReference type="ChEBI" id="CHEBI:15378"/>
        <dbReference type="ChEBI" id="CHEBI:16418"/>
        <dbReference type="ChEBI" id="CHEBI:17252"/>
        <dbReference type="ChEBI" id="CHEBI:57783"/>
        <dbReference type="ChEBI" id="CHEBI:58349"/>
        <dbReference type="EC" id="1.1.1.149"/>
    </reaction>
    <physiologicalReaction direction="right-to-left" evidence="2">
        <dbReference type="Rhea" id="RHEA:15859"/>
    </physiologicalReaction>
</comment>
<comment type="catalytic activity">
    <reaction evidence="2">
        <text>(17R,20S)-17,20-dihydroxypregn-4-en-3-one + NAD(+) = 17alpha-hydroxyprogesterone + NADH + H(+)</text>
        <dbReference type="Rhea" id="RHEA:15853"/>
        <dbReference type="ChEBI" id="CHEBI:15378"/>
        <dbReference type="ChEBI" id="CHEBI:16418"/>
        <dbReference type="ChEBI" id="CHEBI:17252"/>
        <dbReference type="ChEBI" id="CHEBI:57540"/>
        <dbReference type="ChEBI" id="CHEBI:57945"/>
        <dbReference type="EC" id="1.1.1.149"/>
    </reaction>
    <physiologicalReaction direction="right-to-left" evidence="2">
        <dbReference type="Rhea" id="RHEA:15855"/>
    </physiologicalReaction>
</comment>
<comment type="catalytic activity">
    <reaction evidence="2">
        <text>(20S)-hydroxypregn-4-en-3-one + NADP(+) = progesterone + NADPH + H(+)</text>
        <dbReference type="Rhea" id="RHEA:42112"/>
        <dbReference type="ChEBI" id="CHEBI:15378"/>
        <dbReference type="ChEBI" id="CHEBI:17026"/>
        <dbReference type="ChEBI" id="CHEBI:28453"/>
        <dbReference type="ChEBI" id="CHEBI:57783"/>
        <dbReference type="ChEBI" id="CHEBI:58349"/>
    </reaction>
    <physiologicalReaction direction="left-to-right" evidence="2">
        <dbReference type="Rhea" id="RHEA:42113"/>
    </physiologicalReaction>
    <physiologicalReaction direction="right-to-left" evidence="2">
        <dbReference type="Rhea" id="RHEA:42114"/>
    </physiologicalReaction>
</comment>
<comment type="catalytic activity">
    <reaction evidence="2">
        <text>(20S)-hydroxypregn-4-en-3-one + NAD(+) = progesterone + NADH + H(+)</text>
        <dbReference type="Rhea" id="RHEA:42108"/>
        <dbReference type="ChEBI" id="CHEBI:15378"/>
        <dbReference type="ChEBI" id="CHEBI:17026"/>
        <dbReference type="ChEBI" id="CHEBI:28453"/>
        <dbReference type="ChEBI" id="CHEBI:57540"/>
        <dbReference type="ChEBI" id="CHEBI:57945"/>
    </reaction>
    <physiologicalReaction direction="left-to-right" evidence="2">
        <dbReference type="Rhea" id="RHEA:42109"/>
    </physiologicalReaction>
    <physiologicalReaction direction="right-to-left" evidence="2">
        <dbReference type="Rhea" id="RHEA:42110"/>
    </physiologicalReaction>
</comment>
<comment type="catalytic activity">
    <reaction evidence="2">
        <text>(1R,2R)-1,2-dihydrobenzene-1,2-diol + NADP(+) = catechol + NADPH + H(+)</text>
        <dbReference type="Rhea" id="RHEA:16729"/>
        <dbReference type="ChEBI" id="CHEBI:10702"/>
        <dbReference type="ChEBI" id="CHEBI:15378"/>
        <dbReference type="ChEBI" id="CHEBI:18135"/>
        <dbReference type="ChEBI" id="CHEBI:57783"/>
        <dbReference type="ChEBI" id="CHEBI:58349"/>
        <dbReference type="EC" id="1.3.1.20"/>
    </reaction>
</comment>
<comment type="catalytic activity">
    <reaction evidence="2">
        <text>(S)-indan-1-ol + NAD(+) = indan-1-one + NADH + H(+)</text>
        <dbReference type="Rhea" id="RHEA:16317"/>
        <dbReference type="ChEBI" id="CHEBI:15378"/>
        <dbReference type="ChEBI" id="CHEBI:17404"/>
        <dbReference type="ChEBI" id="CHEBI:57540"/>
        <dbReference type="ChEBI" id="CHEBI:57945"/>
        <dbReference type="ChEBI" id="CHEBI:156384"/>
        <dbReference type="EC" id="1.1.1.112"/>
    </reaction>
</comment>
<comment type="catalytic activity">
    <reaction evidence="2">
        <text>(S)-indan-1-ol + NADP(+) = indan-1-one + NADPH + H(+)</text>
        <dbReference type="Rhea" id="RHEA:16321"/>
        <dbReference type="ChEBI" id="CHEBI:15378"/>
        <dbReference type="ChEBI" id="CHEBI:17404"/>
        <dbReference type="ChEBI" id="CHEBI:57783"/>
        <dbReference type="ChEBI" id="CHEBI:58349"/>
        <dbReference type="ChEBI" id="CHEBI:156384"/>
        <dbReference type="EC" id="1.1.1.112"/>
    </reaction>
</comment>
<comment type="catalytic activity">
    <reaction evidence="2">
        <text>5alpha-androstane-3alpha,17beta-diol + NADP(+) = 17beta-hydroxy-5alpha-androstan-3-one + NADPH + H(+)</text>
        <dbReference type="Rhea" id="RHEA:42116"/>
        <dbReference type="ChEBI" id="CHEBI:15378"/>
        <dbReference type="ChEBI" id="CHEBI:16330"/>
        <dbReference type="ChEBI" id="CHEBI:36713"/>
        <dbReference type="ChEBI" id="CHEBI:57783"/>
        <dbReference type="ChEBI" id="CHEBI:58349"/>
    </reaction>
    <physiologicalReaction direction="right-to-left" evidence="2">
        <dbReference type="Rhea" id="RHEA:42118"/>
    </physiologicalReaction>
</comment>
<comment type="catalytic activity">
    <reaction evidence="2">
        <text>5alpha-androstane-3beta,17beta-diol + NADP(+) = 17beta-hydroxy-5alpha-androstan-3-one + NADPH + H(+)</text>
        <dbReference type="Rhea" id="RHEA:16297"/>
        <dbReference type="ChEBI" id="CHEBI:15378"/>
        <dbReference type="ChEBI" id="CHEBI:16330"/>
        <dbReference type="ChEBI" id="CHEBI:18329"/>
        <dbReference type="ChEBI" id="CHEBI:57783"/>
        <dbReference type="ChEBI" id="CHEBI:58349"/>
        <dbReference type="EC" id="1.1.1.210"/>
    </reaction>
    <physiologicalReaction direction="right-to-left" evidence="2">
        <dbReference type="Rhea" id="RHEA:16299"/>
    </physiologicalReaction>
</comment>
<comment type="catalytic activity">
    <reaction evidence="2">
        <text>5alpha-androstane-3alpha,17beta-diol + NAD(+) = 17beta-hydroxy-5alpha-androstan-3-one + NADH + H(+)</text>
        <dbReference type="Rhea" id="RHEA:42004"/>
        <dbReference type="ChEBI" id="CHEBI:15378"/>
        <dbReference type="ChEBI" id="CHEBI:16330"/>
        <dbReference type="ChEBI" id="CHEBI:36713"/>
        <dbReference type="ChEBI" id="CHEBI:57540"/>
        <dbReference type="ChEBI" id="CHEBI:57945"/>
        <dbReference type="EC" id="1.1.1.53"/>
    </reaction>
    <physiologicalReaction direction="right-to-left" evidence="2">
        <dbReference type="Rhea" id="RHEA:42006"/>
    </physiologicalReaction>
</comment>
<comment type="catalytic activity">
    <reaction evidence="2">
        <text>17beta-hydroxy-5alpha-androstan-3-one + NADP(+) = 5alpha-androstan-3,17-dione + NADPH + H(+)</text>
        <dbReference type="Rhea" id="RHEA:42120"/>
        <dbReference type="ChEBI" id="CHEBI:15378"/>
        <dbReference type="ChEBI" id="CHEBI:15994"/>
        <dbReference type="ChEBI" id="CHEBI:16330"/>
        <dbReference type="ChEBI" id="CHEBI:57783"/>
        <dbReference type="ChEBI" id="CHEBI:58349"/>
    </reaction>
    <physiologicalReaction direction="right-to-left" evidence="2">
        <dbReference type="Rhea" id="RHEA:42122"/>
    </physiologicalReaction>
</comment>
<comment type="catalytic activity">
    <reaction evidence="2">
        <text>androsterone + NADP(+) = 5alpha-androstan-3,17-dione + NADPH + H(+)</text>
        <dbReference type="Rhea" id="RHEA:20377"/>
        <dbReference type="ChEBI" id="CHEBI:15378"/>
        <dbReference type="ChEBI" id="CHEBI:15994"/>
        <dbReference type="ChEBI" id="CHEBI:16032"/>
        <dbReference type="ChEBI" id="CHEBI:57783"/>
        <dbReference type="ChEBI" id="CHEBI:58349"/>
        <dbReference type="EC" id="1.1.1.209"/>
    </reaction>
    <physiologicalReaction direction="right-to-left" evidence="2">
        <dbReference type="Rhea" id="RHEA:20379"/>
    </physiologicalReaction>
</comment>
<comment type="catalytic activity">
    <reaction evidence="2">
        <text>androsterone + NADPH + H(+) = 5alpha-androstane-3alpha,17beta-diol + NADP(+)</text>
        <dbReference type="Rhea" id="RHEA:42156"/>
        <dbReference type="ChEBI" id="CHEBI:15378"/>
        <dbReference type="ChEBI" id="CHEBI:16032"/>
        <dbReference type="ChEBI" id="CHEBI:36713"/>
        <dbReference type="ChEBI" id="CHEBI:57783"/>
        <dbReference type="ChEBI" id="CHEBI:58349"/>
    </reaction>
    <physiologicalReaction direction="left-to-right" evidence="2">
        <dbReference type="Rhea" id="RHEA:42157"/>
    </physiologicalReaction>
    <physiologicalReaction direction="right-to-left" evidence="2">
        <dbReference type="Rhea" id="RHEA:42158"/>
    </physiologicalReaction>
</comment>
<comment type="catalytic activity">
    <reaction evidence="2">
        <text>5alpha-androstane-3alpha,17beta-diol + NAD(+) = androsterone + NADH + H(+)</text>
        <dbReference type="Rhea" id="RHEA:42124"/>
        <dbReference type="ChEBI" id="CHEBI:15378"/>
        <dbReference type="ChEBI" id="CHEBI:16032"/>
        <dbReference type="ChEBI" id="CHEBI:36713"/>
        <dbReference type="ChEBI" id="CHEBI:57540"/>
        <dbReference type="ChEBI" id="CHEBI:57945"/>
    </reaction>
    <physiologicalReaction direction="right-to-left" evidence="2">
        <dbReference type="Rhea" id="RHEA:42126"/>
    </physiologicalReaction>
</comment>
<comment type="catalytic activity">
    <reaction evidence="2">
        <text>17beta-estradiol + NADP(+) = estrone + NADPH + H(+)</text>
        <dbReference type="Rhea" id="RHEA:24616"/>
        <dbReference type="ChEBI" id="CHEBI:15378"/>
        <dbReference type="ChEBI" id="CHEBI:16469"/>
        <dbReference type="ChEBI" id="CHEBI:17263"/>
        <dbReference type="ChEBI" id="CHEBI:57783"/>
        <dbReference type="ChEBI" id="CHEBI:58349"/>
        <dbReference type="EC" id="1.1.1.62"/>
    </reaction>
    <physiologicalReaction direction="left-to-right" evidence="2">
        <dbReference type="Rhea" id="RHEA:24617"/>
    </physiologicalReaction>
    <physiologicalReaction direction="right-to-left" evidence="2">
        <dbReference type="Rhea" id="RHEA:24618"/>
    </physiologicalReaction>
</comment>
<comment type="catalytic activity">
    <reaction evidence="2">
        <text>17beta-estradiol + NAD(+) = estrone + NADH + H(+)</text>
        <dbReference type="Rhea" id="RHEA:24612"/>
        <dbReference type="ChEBI" id="CHEBI:15378"/>
        <dbReference type="ChEBI" id="CHEBI:16469"/>
        <dbReference type="ChEBI" id="CHEBI:17263"/>
        <dbReference type="ChEBI" id="CHEBI:57540"/>
        <dbReference type="ChEBI" id="CHEBI:57945"/>
        <dbReference type="EC" id="1.1.1.62"/>
    </reaction>
    <physiologicalReaction direction="left-to-right" evidence="2">
        <dbReference type="Rhea" id="RHEA:24613"/>
    </physiologicalReaction>
    <physiologicalReaction direction="right-to-left" evidence="2">
        <dbReference type="Rhea" id="RHEA:24614"/>
    </physiologicalReaction>
</comment>
<comment type="catalytic activity">
    <reaction evidence="2">
        <text>testosterone + NADP(+) = androst-4-ene-3,17-dione + NADPH + H(+)</text>
        <dbReference type="Rhea" id="RHEA:14981"/>
        <dbReference type="ChEBI" id="CHEBI:15378"/>
        <dbReference type="ChEBI" id="CHEBI:16422"/>
        <dbReference type="ChEBI" id="CHEBI:17347"/>
        <dbReference type="ChEBI" id="CHEBI:57783"/>
        <dbReference type="ChEBI" id="CHEBI:58349"/>
        <dbReference type="EC" id="1.1.1.51"/>
    </reaction>
    <physiologicalReaction direction="right-to-left" evidence="2">
        <dbReference type="Rhea" id="RHEA:14983"/>
    </physiologicalReaction>
</comment>
<comment type="catalytic activity">
    <reaction evidence="2">
        <text>20alpha-hydroxy-5beta-pregnan-3-one + NADP(+) = 5beta-pregnan-3,20-dione + NADPH + H(+)</text>
        <dbReference type="Rhea" id="RHEA:42168"/>
        <dbReference type="ChEBI" id="CHEBI:15378"/>
        <dbReference type="ChEBI" id="CHEBI:30154"/>
        <dbReference type="ChEBI" id="CHEBI:57783"/>
        <dbReference type="ChEBI" id="CHEBI:58349"/>
        <dbReference type="ChEBI" id="CHEBI:78666"/>
    </reaction>
    <physiologicalReaction direction="right-to-left" evidence="2">
        <dbReference type="Rhea" id="RHEA:42170"/>
    </physiologicalReaction>
</comment>
<comment type="catalytic activity">
    <reaction evidence="2">
        <text>3beta-hydroxy-5beta-pregnane-20-one + NADP(+) = 5beta-pregnan-3,20-dione + NADPH + H(+)</text>
        <dbReference type="Rhea" id="RHEA:22944"/>
        <dbReference type="ChEBI" id="CHEBI:15378"/>
        <dbReference type="ChEBI" id="CHEBI:16229"/>
        <dbReference type="ChEBI" id="CHEBI:30154"/>
        <dbReference type="ChEBI" id="CHEBI:57783"/>
        <dbReference type="ChEBI" id="CHEBI:58349"/>
    </reaction>
    <physiologicalReaction direction="right-to-left" evidence="2">
        <dbReference type="Rhea" id="RHEA:22946"/>
    </physiologicalReaction>
</comment>
<comment type="catalytic activity">
    <reaction evidence="2">
        <text>3beta-hydroxy-5beta-pregnane-20-one + NADPH + H(+) = 3beta,20alpha-dihydroxy-5beta-pregnane + NADP(+)</text>
        <dbReference type="Rhea" id="RHEA:65496"/>
        <dbReference type="ChEBI" id="CHEBI:15378"/>
        <dbReference type="ChEBI" id="CHEBI:16229"/>
        <dbReference type="ChEBI" id="CHEBI:57783"/>
        <dbReference type="ChEBI" id="CHEBI:58349"/>
        <dbReference type="ChEBI" id="CHEBI:156526"/>
    </reaction>
    <physiologicalReaction direction="left-to-right" evidence="2">
        <dbReference type="Rhea" id="RHEA:65497"/>
    </physiologicalReaction>
</comment>
<comment type="catalytic activity">
    <reaction evidence="2">
        <text>(3beta,5alpha,17beta)-3-hydroxyandrostan-17-yl sulfate + NADP(+) = 5alpha-dihydrotestosterone sulfate + NADPH + H(+)</text>
        <dbReference type="Rhea" id="RHEA:53120"/>
        <dbReference type="ChEBI" id="CHEBI:15378"/>
        <dbReference type="ChEBI" id="CHEBI:57783"/>
        <dbReference type="ChEBI" id="CHEBI:58349"/>
        <dbReference type="ChEBI" id="CHEBI:136982"/>
        <dbReference type="ChEBI" id="CHEBI:136983"/>
    </reaction>
    <physiologicalReaction direction="right-to-left" evidence="2">
        <dbReference type="Rhea" id="RHEA:53122"/>
    </physiologicalReaction>
</comment>
<comment type="pathway">
    <text evidence="2">Steroid metabolism.</text>
</comment>
<comment type="subunit">
    <text evidence="2">Monomer.</text>
</comment>
<comment type="subcellular location">
    <subcellularLocation>
        <location evidence="2">Cytoplasm</location>
        <location evidence="2">Cytosol</location>
    </subcellularLocation>
</comment>
<comment type="similarity">
    <text evidence="3">Belongs to the aldo/keto reductase family.</text>
</comment>
<accession>Q5REQ0</accession>
<keyword id="KW-0963">Cytoplasm</keyword>
<keyword id="KW-0443">Lipid metabolism</keyword>
<keyword id="KW-0521">NADP</keyword>
<keyword id="KW-0560">Oxidoreductase</keyword>
<keyword id="KW-1185">Reference proteome</keyword>
<gene>
    <name type="primary">AKR1C1</name>
</gene>
<proteinExistence type="evidence at transcript level"/>
<name>AK1C1_PONAB</name>
<evidence type="ECO:0000250" key="1"/>
<evidence type="ECO:0000250" key="2">
    <source>
        <dbReference type="UniProtKB" id="Q04828"/>
    </source>
</evidence>
<evidence type="ECO:0000305" key="3"/>
<feature type="chain" id="PRO_0000124636" description="Aldo-keto reductase family 1 member C1">
    <location>
        <begin position="1"/>
        <end position="323"/>
    </location>
</feature>
<feature type="active site" description="Proton donor" evidence="1">
    <location>
        <position position="55"/>
    </location>
</feature>
<feature type="binding site" evidence="1">
    <location>
        <begin position="20"/>
        <end position="24"/>
    </location>
    <ligand>
        <name>NADP(+)</name>
        <dbReference type="ChEBI" id="CHEBI:58349"/>
    </ligand>
</feature>
<feature type="binding site" evidence="1">
    <location>
        <position position="24"/>
    </location>
    <ligand>
        <name>substrate</name>
    </ligand>
</feature>
<feature type="binding site" evidence="1">
    <location>
        <position position="50"/>
    </location>
    <ligand>
        <name>NADP(+)</name>
        <dbReference type="ChEBI" id="CHEBI:58349"/>
    </ligand>
</feature>
<feature type="binding site" evidence="1">
    <location>
        <position position="117"/>
    </location>
    <ligand>
        <name>substrate</name>
    </ligand>
</feature>
<feature type="binding site" evidence="1">
    <location>
        <begin position="166"/>
        <end position="167"/>
    </location>
    <ligand>
        <name>NADP(+)</name>
        <dbReference type="ChEBI" id="CHEBI:58349"/>
    </ligand>
</feature>
<feature type="binding site" evidence="1">
    <location>
        <position position="190"/>
    </location>
    <ligand>
        <name>NADP(+)</name>
        <dbReference type="ChEBI" id="CHEBI:58349"/>
    </ligand>
</feature>
<feature type="binding site" evidence="1">
    <location>
        <begin position="216"/>
        <end position="222"/>
    </location>
    <ligand>
        <name>NADP(+)</name>
        <dbReference type="ChEBI" id="CHEBI:58349"/>
    </ligand>
</feature>
<feature type="binding site" evidence="1">
    <location>
        <position position="222"/>
    </location>
    <ligand>
        <name>substrate</name>
    </ligand>
</feature>
<feature type="binding site" evidence="1">
    <location>
        <position position="227"/>
    </location>
    <ligand>
        <name>substrate</name>
    </ligand>
</feature>
<feature type="binding site" evidence="1">
    <location>
        <begin position="270"/>
        <end position="280"/>
    </location>
    <ligand>
        <name>NADP(+)</name>
        <dbReference type="ChEBI" id="CHEBI:58349"/>
    </ligand>
</feature>
<feature type="site" description="Important for substrate specificity" evidence="1">
    <location>
        <position position="54"/>
    </location>
</feature>
<feature type="site" description="Lowers pKa of active site Tyr" evidence="1">
    <location>
        <position position="84"/>
    </location>
</feature>